<feature type="chain" id="PRO_0000223261" description="Golgi pH regulator">
    <location>
        <begin position="1"/>
        <end position="455"/>
    </location>
</feature>
<feature type="transmembrane region" description="Helical" evidence="2">
    <location>
        <begin position="5"/>
        <end position="25"/>
    </location>
</feature>
<feature type="transmembrane region" description="Helical" evidence="2">
    <location>
        <begin position="46"/>
        <end position="66"/>
    </location>
</feature>
<feature type="transmembrane region" description="Helical" evidence="2">
    <location>
        <begin position="79"/>
        <end position="99"/>
    </location>
</feature>
<feature type="transmembrane region" description="Helical" evidence="2">
    <location>
        <begin position="114"/>
        <end position="134"/>
    </location>
</feature>
<feature type="transmembrane region" description="Helical" evidence="2">
    <location>
        <begin position="150"/>
        <end position="170"/>
    </location>
</feature>
<feature type="transmembrane region" description="Helical" evidence="2">
    <location>
        <begin position="288"/>
        <end position="308"/>
    </location>
</feature>
<feature type="transmembrane region" description="Helical" evidence="2">
    <location>
        <begin position="343"/>
        <end position="363"/>
    </location>
</feature>
<feature type="transmembrane region" description="Helical" evidence="2">
    <location>
        <begin position="378"/>
        <end position="398"/>
    </location>
</feature>
<feature type="transmembrane region" description="Helical" evidence="2">
    <location>
        <begin position="425"/>
        <end position="445"/>
    </location>
</feature>
<feature type="glycosylation site" description="N-linked (GlcNAc...) asparagine" evidence="2">
    <location>
        <position position="180"/>
    </location>
</feature>
<feature type="mutagenesis site" description="In explorer; no obvious external deformities but mutants are 40% smaller than wild-type litter mates and show reduced frequency of CD3+ T cells, CD4+ T cells and CD8+ T cells which all display elevated CD44 expression." evidence="3">
    <location>
        <begin position="273"/>
        <end position="303"/>
    </location>
</feature>
<feature type="sequence conflict" description="In Ref. 1; BAC28872." evidence="4" ref="1">
    <original>N</original>
    <variation>H</variation>
    <location>
        <position position="243"/>
    </location>
</feature>
<keyword id="KW-0325">Glycoprotein</keyword>
<keyword id="KW-0333">Golgi apparatus</keyword>
<keyword id="KW-0407">Ion channel</keyword>
<keyword id="KW-0406">Ion transport</keyword>
<keyword id="KW-0472">Membrane</keyword>
<keyword id="KW-0653">Protein transport</keyword>
<keyword id="KW-1185">Reference proteome</keyword>
<keyword id="KW-0812">Transmembrane</keyword>
<keyword id="KW-1133">Transmembrane helix</keyword>
<keyword id="KW-0813">Transport</keyword>
<keyword id="KW-0851">Voltage-gated channel</keyword>
<gene>
    <name evidence="5" type="primary">Gpr89</name>
    <name type="synonym">Gphr</name>
    <name evidence="5" type="synonym">Gpr89a</name>
</gene>
<name>GPHR_MOUSE</name>
<dbReference type="EMBL" id="AK034895">
    <property type="protein sequence ID" value="BAC28872.1"/>
    <property type="molecule type" value="mRNA"/>
</dbReference>
<dbReference type="EMBL" id="AK016787">
    <property type="protein sequence ID" value="BAB30430.1"/>
    <property type="molecule type" value="mRNA"/>
</dbReference>
<dbReference type="EMBL" id="BC010729">
    <property type="protein sequence ID" value="AAH10729.1"/>
    <property type="molecule type" value="mRNA"/>
</dbReference>
<dbReference type="CCDS" id="CCDS17650.1"/>
<dbReference type="RefSeq" id="NP_080505.1">
    <property type="nucleotide sequence ID" value="NM_026229.5"/>
</dbReference>
<dbReference type="SMR" id="Q8BS95"/>
<dbReference type="BioGRID" id="212268">
    <property type="interactions" value="2"/>
</dbReference>
<dbReference type="FunCoup" id="Q8BS95">
    <property type="interactions" value="665"/>
</dbReference>
<dbReference type="STRING" id="10090.ENSMUSP00000029738"/>
<dbReference type="GlyCosmos" id="Q8BS95">
    <property type="glycosylation" value="1 site, No reported glycans"/>
</dbReference>
<dbReference type="GlyGen" id="Q8BS95">
    <property type="glycosylation" value="2 sites, 1 N-linked glycan (1 site)"/>
</dbReference>
<dbReference type="iPTMnet" id="Q8BS95"/>
<dbReference type="PhosphoSitePlus" id="Q8BS95"/>
<dbReference type="SwissPalm" id="Q8BS95"/>
<dbReference type="PaxDb" id="10090-ENSMUSP00000029738"/>
<dbReference type="PeptideAtlas" id="Q8BS95"/>
<dbReference type="ProteomicsDB" id="271266"/>
<dbReference type="Pumba" id="Q8BS95"/>
<dbReference type="DNASU" id="67549"/>
<dbReference type="Ensembl" id="ENSMUST00000029738.14">
    <property type="protein sequence ID" value="ENSMUSP00000029738.8"/>
    <property type="gene ID" value="ENSMUSG00000028096.14"/>
</dbReference>
<dbReference type="GeneID" id="67549"/>
<dbReference type="KEGG" id="mmu:67549"/>
<dbReference type="UCSC" id="uc008qom.1">
    <property type="organism name" value="mouse"/>
</dbReference>
<dbReference type="AGR" id="MGI:1914799"/>
<dbReference type="CTD" id="67549"/>
<dbReference type="MGI" id="MGI:1914799">
    <property type="gene designation" value="Gpr89"/>
</dbReference>
<dbReference type="VEuPathDB" id="HostDB:ENSMUSG00000028096"/>
<dbReference type="eggNOG" id="KOG2417">
    <property type="taxonomic scope" value="Eukaryota"/>
</dbReference>
<dbReference type="GeneTree" id="ENSGT00390000000684"/>
<dbReference type="HOGENOM" id="CLU_030540_1_0_1"/>
<dbReference type="InParanoid" id="Q8BS95"/>
<dbReference type="OMA" id="FSVYCVY"/>
<dbReference type="OrthoDB" id="264392at2759"/>
<dbReference type="PhylomeDB" id="Q8BS95"/>
<dbReference type="TreeFam" id="TF313484"/>
<dbReference type="BioGRID-ORCS" id="67549">
    <property type="hits" value="7 hits in 81 CRISPR screens"/>
</dbReference>
<dbReference type="ChiTaRS" id="Gpr89">
    <property type="organism name" value="mouse"/>
</dbReference>
<dbReference type="PRO" id="PR:Q8BS95"/>
<dbReference type="Proteomes" id="UP000000589">
    <property type="component" value="Chromosome 3"/>
</dbReference>
<dbReference type="RNAct" id="Q8BS95">
    <property type="molecule type" value="protein"/>
</dbReference>
<dbReference type="Bgee" id="ENSMUSG00000028096">
    <property type="expression patterns" value="Expressed in small intestine Peyer's patch and 266 other cell types or tissues"/>
</dbReference>
<dbReference type="ExpressionAtlas" id="Q8BS95">
    <property type="expression patterns" value="baseline and differential"/>
</dbReference>
<dbReference type="GO" id="GO:0032580">
    <property type="term" value="C:Golgi cisterna membrane"/>
    <property type="evidence" value="ECO:0000250"/>
    <property type="project" value="UniProtKB"/>
</dbReference>
<dbReference type="GO" id="GO:0000139">
    <property type="term" value="C:Golgi membrane"/>
    <property type="evidence" value="ECO:0007669"/>
    <property type="project" value="UniProtKB-SubCell"/>
</dbReference>
<dbReference type="GO" id="GO:0030660">
    <property type="term" value="C:Golgi-associated vesicle membrane"/>
    <property type="evidence" value="ECO:0000250"/>
    <property type="project" value="UniProtKB"/>
</dbReference>
<dbReference type="GO" id="GO:0034702">
    <property type="term" value="C:monoatomic ion channel complex"/>
    <property type="evidence" value="ECO:0007669"/>
    <property type="project" value="UniProtKB-KW"/>
</dbReference>
<dbReference type="GO" id="GO:0008308">
    <property type="term" value="F:voltage-gated monoatomic anion channel activity"/>
    <property type="evidence" value="ECO:0000250"/>
    <property type="project" value="UniProtKB"/>
</dbReference>
<dbReference type="GO" id="GO:0051452">
    <property type="term" value="P:intracellular pH reduction"/>
    <property type="evidence" value="ECO:0000250"/>
    <property type="project" value="UniProtKB"/>
</dbReference>
<dbReference type="GO" id="GO:0015031">
    <property type="term" value="P:protein transport"/>
    <property type="evidence" value="ECO:0007669"/>
    <property type="project" value="UniProtKB-KW"/>
</dbReference>
<dbReference type="GO" id="GO:0043588">
    <property type="term" value="P:skin development"/>
    <property type="evidence" value="ECO:0000315"/>
    <property type="project" value="MGI"/>
</dbReference>
<dbReference type="GO" id="GO:0030217">
    <property type="term" value="P:T cell differentiation"/>
    <property type="evidence" value="ECO:0000315"/>
    <property type="project" value="UniProtKB"/>
</dbReference>
<dbReference type="InterPro" id="IPR025969">
    <property type="entry name" value="ABA_GPCR_dom"/>
</dbReference>
<dbReference type="InterPro" id="IPR022535">
    <property type="entry name" value="Golgi_pH-regulator_cons_dom"/>
</dbReference>
<dbReference type="InterPro" id="IPR015672">
    <property type="entry name" value="GPHR/GTG"/>
</dbReference>
<dbReference type="PANTHER" id="PTHR15948">
    <property type="entry name" value="G-PROTEIN COUPLED RECEPTOR 89-RELATED"/>
    <property type="match status" value="1"/>
</dbReference>
<dbReference type="PANTHER" id="PTHR15948:SF0">
    <property type="entry name" value="GOLGI PH REGULATOR A-RELATED"/>
    <property type="match status" value="1"/>
</dbReference>
<dbReference type="Pfam" id="PF12430">
    <property type="entry name" value="ABA_GPCR"/>
    <property type="match status" value="1"/>
</dbReference>
<dbReference type="Pfam" id="PF12537">
    <property type="entry name" value="GPHR_N"/>
    <property type="match status" value="1"/>
</dbReference>
<protein>
    <recommendedName>
        <fullName evidence="4">Golgi pH regulator</fullName>
    </recommendedName>
    <alternativeName>
        <fullName>Protein GPR89</fullName>
    </alternativeName>
</protein>
<reference key="1">
    <citation type="journal article" date="2005" name="Science">
        <title>The transcriptional landscape of the mammalian genome.</title>
        <authorList>
            <person name="Carninci P."/>
            <person name="Kasukawa T."/>
            <person name="Katayama S."/>
            <person name="Gough J."/>
            <person name="Frith M.C."/>
            <person name="Maeda N."/>
            <person name="Oyama R."/>
            <person name="Ravasi T."/>
            <person name="Lenhard B."/>
            <person name="Wells C."/>
            <person name="Kodzius R."/>
            <person name="Shimokawa K."/>
            <person name="Bajic V.B."/>
            <person name="Brenner S.E."/>
            <person name="Batalov S."/>
            <person name="Forrest A.R."/>
            <person name="Zavolan M."/>
            <person name="Davis M.J."/>
            <person name="Wilming L.G."/>
            <person name="Aidinis V."/>
            <person name="Allen J.E."/>
            <person name="Ambesi-Impiombato A."/>
            <person name="Apweiler R."/>
            <person name="Aturaliya R.N."/>
            <person name="Bailey T.L."/>
            <person name="Bansal M."/>
            <person name="Baxter L."/>
            <person name="Beisel K.W."/>
            <person name="Bersano T."/>
            <person name="Bono H."/>
            <person name="Chalk A.M."/>
            <person name="Chiu K.P."/>
            <person name="Choudhary V."/>
            <person name="Christoffels A."/>
            <person name="Clutterbuck D.R."/>
            <person name="Crowe M.L."/>
            <person name="Dalla E."/>
            <person name="Dalrymple B.P."/>
            <person name="de Bono B."/>
            <person name="Della Gatta G."/>
            <person name="di Bernardo D."/>
            <person name="Down T."/>
            <person name="Engstrom P."/>
            <person name="Fagiolini M."/>
            <person name="Faulkner G."/>
            <person name="Fletcher C.F."/>
            <person name="Fukushima T."/>
            <person name="Furuno M."/>
            <person name="Futaki S."/>
            <person name="Gariboldi M."/>
            <person name="Georgii-Hemming P."/>
            <person name="Gingeras T.R."/>
            <person name="Gojobori T."/>
            <person name="Green R.E."/>
            <person name="Gustincich S."/>
            <person name="Harbers M."/>
            <person name="Hayashi Y."/>
            <person name="Hensch T.K."/>
            <person name="Hirokawa N."/>
            <person name="Hill D."/>
            <person name="Huminiecki L."/>
            <person name="Iacono M."/>
            <person name="Ikeo K."/>
            <person name="Iwama A."/>
            <person name="Ishikawa T."/>
            <person name="Jakt M."/>
            <person name="Kanapin A."/>
            <person name="Katoh M."/>
            <person name="Kawasawa Y."/>
            <person name="Kelso J."/>
            <person name="Kitamura H."/>
            <person name="Kitano H."/>
            <person name="Kollias G."/>
            <person name="Krishnan S.P."/>
            <person name="Kruger A."/>
            <person name="Kummerfeld S.K."/>
            <person name="Kurochkin I.V."/>
            <person name="Lareau L.F."/>
            <person name="Lazarevic D."/>
            <person name="Lipovich L."/>
            <person name="Liu J."/>
            <person name="Liuni S."/>
            <person name="McWilliam S."/>
            <person name="Madan Babu M."/>
            <person name="Madera M."/>
            <person name="Marchionni L."/>
            <person name="Matsuda H."/>
            <person name="Matsuzawa S."/>
            <person name="Miki H."/>
            <person name="Mignone F."/>
            <person name="Miyake S."/>
            <person name="Morris K."/>
            <person name="Mottagui-Tabar S."/>
            <person name="Mulder N."/>
            <person name="Nakano N."/>
            <person name="Nakauchi H."/>
            <person name="Ng P."/>
            <person name="Nilsson R."/>
            <person name="Nishiguchi S."/>
            <person name="Nishikawa S."/>
            <person name="Nori F."/>
            <person name="Ohara O."/>
            <person name="Okazaki Y."/>
            <person name="Orlando V."/>
            <person name="Pang K.C."/>
            <person name="Pavan W.J."/>
            <person name="Pavesi G."/>
            <person name="Pesole G."/>
            <person name="Petrovsky N."/>
            <person name="Piazza S."/>
            <person name="Reed J."/>
            <person name="Reid J.F."/>
            <person name="Ring B.Z."/>
            <person name="Ringwald M."/>
            <person name="Rost B."/>
            <person name="Ruan Y."/>
            <person name="Salzberg S.L."/>
            <person name="Sandelin A."/>
            <person name="Schneider C."/>
            <person name="Schoenbach C."/>
            <person name="Sekiguchi K."/>
            <person name="Semple C.A."/>
            <person name="Seno S."/>
            <person name="Sessa L."/>
            <person name="Sheng Y."/>
            <person name="Shibata Y."/>
            <person name="Shimada H."/>
            <person name="Shimada K."/>
            <person name="Silva D."/>
            <person name="Sinclair B."/>
            <person name="Sperling S."/>
            <person name="Stupka E."/>
            <person name="Sugiura K."/>
            <person name="Sultana R."/>
            <person name="Takenaka Y."/>
            <person name="Taki K."/>
            <person name="Tammoja K."/>
            <person name="Tan S.L."/>
            <person name="Tang S."/>
            <person name="Taylor M.S."/>
            <person name="Tegner J."/>
            <person name="Teichmann S.A."/>
            <person name="Ueda H.R."/>
            <person name="van Nimwegen E."/>
            <person name="Verardo R."/>
            <person name="Wei C.L."/>
            <person name="Yagi K."/>
            <person name="Yamanishi H."/>
            <person name="Zabarovsky E."/>
            <person name="Zhu S."/>
            <person name="Zimmer A."/>
            <person name="Hide W."/>
            <person name="Bult C."/>
            <person name="Grimmond S.M."/>
            <person name="Teasdale R.D."/>
            <person name="Liu E.T."/>
            <person name="Brusic V."/>
            <person name="Quackenbush J."/>
            <person name="Wahlestedt C."/>
            <person name="Mattick J.S."/>
            <person name="Hume D.A."/>
            <person name="Kai C."/>
            <person name="Sasaki D."/>
            <person name="Tomaru Y."/>
            <person name="Fukuda S."/>
            <person name="Kanamori-Katayama M."/>
            <person name="Suzuki M."/>
            <person name="Aoki J."/>
            <person name="Arakawa T."/>
            <person name="Iida J."/>
            <person name="Imamura K."/>
            <person name="Itoh M."/>
            <person name="Kato T."/>
            <person name="Kawaji H."/>
            <person name="Kawagashira N."/>
            <person name="Kawashima T."/>
            <person name="Kojima M."/>
            <person name="Kondo S."/>
            <person name="Konno H."/>
            <person name="Nakano K."/>
            <person name="Ninomiya N."/>
            <person name="Nishio T."/>
            <person name="Okada M."/>
            <person name="Plessy C."/>
            <person name="Shibata K."/>
            <person name="Shiraki T."/>
            <person name="Suzuki S."/>
            <person name="Tagami M."/>
            <person name="Waki K."/>
            <person name="Watahiki A."/>
            <person name="Okamura-Oho Y."/>
            <person name="Suzuki H."/>
            <person name="Kawai J."/>
            <person name="Hayashizaki Y."/>
        </authorList>
    </citation>
    <scope>NUCLEOTIDE SEQUENCE [LARGE SCALE MRNA]</scope>
    <source>
        <strain>C57BL/6J</strain>
        <tissue>Embryo</tissue>
        <tissue>Testis</tissue>
    </source>
</reference>
<reference key="2">
    <citation type="journal article" date="2004" name="Genome Res.">
        <title>The status, quality, and expansion of the NIH full-length cDNA project: the Mammalian Gene Collection (MGC).</title>
        <authorList>
            <consortium name="The MGC Project Team"/>
        </authorList>
    </citation>
    <scope>NUCLEOTIDE SEQUENCE [LARGE SCALE MRNA]</scope>
    <source>
        <strain>FVB/N</strain>
        <tissue>Mammary tumor</tissue>
    </source>
</reference>
<reference key="3">
    <citation type="journal article" date="2010" name="Cell">
        <title>A tissue-specific atlas of mouse protein phosphorylation and expression.</title>
        <authorList>
            <person name="Huttlin E.L."/>
            <person name="Jedrychowski M.P."/>
            <person name="Elias J.E."/>
            <person name="Goswami T."/>
            <person name="Rad R."/>
            <person name="Beausoleil S.A."/>
            <person name="Villen J."/>
            <person name="Haas W."/>
            <person name="Sowa M.E."/>
            <person name="Gygi S.P."/>
        </authorList>
    </citation>
    <scope>IDENTIFICATION BY MASS SPECTROMETRY [LARGE SCALE ANALYSIS]</scope>
    <source>
        <tissue>Pancreas</tissue>
    </source>
</reference>
<reference key="4">
    <citation type="journal article" date="2020" name="Proc. Natl. Acad. Sci. U.S.A.">
        <title>Genetic and structural studies of RABL3 reveal an essential role in lymphoid development and function.</title>
        <authorList>
            <person name="Zhong X."/>
            <person name="Su L."/>
            <person name="Yang Y."/>
            <person name="Nair-Gill E."/>
            <person name="Tang M."/>
            <person name="Anderton P."/>
            <person name="Li X."/>
            <person name="Wang J."/>
            <person name="Zhan X."/>
            <person name="Tomchick D.R."/>
            <person name="Brautigam C.A."/>
            <person name="Moresco E.M.Y."/>
            <person name="Choi J.H."/>
            <person name="Beutler B."/>
        </authorList>
    </citation>
    <scope>IDENTIFICATION BY MASS SPECTROMETRY</scope>
    <scope>FUNCTION</scope>
    <scope>INTERACTION WITH RABL3</scope>
    <scope>MUTAGENESIS OF 273-GLU--MET-303</scope>
</reference>
<comment type="function">
    <text evidence="1 3">Voltage-gated channel that enables the transfer of monoatomic anions such as iodide, chloride, bromide and fluoride which may function in counter-ion conductance and participates in Golgi acidification (By similarity). Plays a role in lymphocyte development, probably by acting as a RABL3 effector in hematopoietic cells (PubMed:32220963).</text>
</comment>
<comment type="catalytic activity">
    <reaction evidence="1">
        <text>iodide(out) = iodide(in)</text>
        <dbReference type="Rhea" id="RHEA:66324"/>
        <dbReference type="ChEBI" id="CHEBI:16382"/>
    </reaction>
</comment>
<comment type="catalytic activity">
    <reaction evidence="1">
        <text>chloride(in) = chloride(out)</text>
        <dbReference type="Rhea" id="RHEA:29823"/>
        <dbReference type="ChEBI" id="CHEBI:17996"/>
    </reaction>
</comment>
<comment type="catalytic activity">
    <reaction evidence="1">
        <text>bromide(in) = bromide(out)</text>
        <dbReference type="Rhea" id="RHEA:75383"/>
        <dbReference type="ChEBI" id="CHEBI:15858"/>
    </reaction>
</comment>
<comment type="catalytic activity">
    <reaction evidence="1">
        <text>fluoride(in) = fluoride(out)</text>
        <dbReference type="Rhea" id="RHEA:76159"/>
        <dbReference type="ChEBI" id="CHEBI:17051"/>
    </reaction>
</comment>
<comment type="subunit">
    <text evidence="1 3">Homotrimer (By similarity). Interacts with RABL3; the interaction stabilizes GPR89 (PubMed:32220963).</text>
</comment>
<comment type="subcellular location">
    <subcellularLocation>
        <location evidence="1">Golgi apparatus membrane</location>
        <topology evidence="2">Multi-pass membrane protein</topology>
    </subcellularLocation>
</comment>
<comment type="similarity">
    <text evidence="4">Belongs to the Golgi pH regulator (TC 1.A.38) family.</text>
</comment>
<evidence type="ECO:0000250" key="1">
    <source>
        <dbReference type="UniProtKB" id="B7ZAQ6"/>
    </source>
</evidence>
<evidence type="ECO:0000255" key="2"/>
<evidence type="ECO:0000269" key="3">
    <source>
    </source>
</evidence>
<evidence type="ECO:0000305" key="4"/>
<evidence type="ECO:0000312" key="5">
    <source>
        <dbReference type="MGI" id="MGI:1914799"/>
    </source>
</evidence>
<sequence>MSFLIDSSIMITSQILFFGFGWLFFMRQLFKDYEVRQYVVQVIFSVTFAFSCTMFELIIFEILGVLNSSSRYFHWKLNLCVILLILVFMVPFYIGYFIVSNIQLLHKQRLLFSCLLWLTFMYFFWKLGDPFPILSPKHGILSIEQLISRVGVIGVTLMALLSGFGAVNCPYTYMSYFLRNVTDTDILALERRLLQTMDMIISKKKRMAVARRTMFQRGDVQNKPSGLWGMLKSVTASAPGSENLTLIQQEVDALEELSRQLFLETADLYATKERIEYSKTFKGKYFNFLGYFFSIYCVWKIFMATINIVLDRVGKTDPVTRGIEITVNYLGIQFDVKFWSQHISFILVGIIIVTSIRGLLITLTKFFYAISSSKSSNVIVLLLAQIMGMYFVSSVLLIRMSMPPEYRTIITEVLGELQFNFYHRWFDVIFLVSALSSILFLYLAHKQAPEKHMAP</sequence>
<accession>Q8BS95</accession>
<accession>Q9D455</accession>
<proteinExistence type="evidence at protein level"/>
<organism>
    <name type="scientific">Mus musculus</name>
    <name type="common">Mouse</name>
    <dbReference type="NCBI Taxonomy" id="10090"/>
    <lineage>
        <taxon>Eukaryota</taxon>
        <taxon>Metazoa</taxon>
        <taxon>Chordata</taxon>
        <taxon>Craniata</taxon>
        <taxon>Vertebrata</taxon>
        <taxon>Euteleostomi</taxon>
        <taxon>Mammalia</taxon>
        <taxon>Eutheria</taxon>
        <taxon>Euarchontoglires</taxon>
        <taxon>Glires</taxon>
        <taxon>Rodentia</taxon>
        <taxon>Myomorpha</taxon>
        <taxon>Muroidea</taxon>
        <taxon>Muridae</taxon>
        <taxon>Murinae</taxon>
        <taxon>Mus</taxon>
        <taxon>Mus</taxon>
    </lineage>
</organism>